<dbReference type="EMBL" id="Y08501">
    <property type="protein sequence ID" value="CAA69743.1"/>
    <property type="molecule type" value="Genomic_DNA"/>
</dbReference>
<dbReference type="EMBL" id="BK010421">
    <property type="status" value="NOT_ANNOTATED_CDS"/>
    <property type="molecule type" value="Genomic_DNA"/>
</dbReference>
<dbReference type="EMBL" id="AC007729">
    <property type="protein sequence ID" value="AAM15503.1"/>
    <property type="molecule type" value="Genomic_DNA"/>
</dbReference>
<dbReference type="EMBL" id="CP002685">
    <property type="protein sequence ID" value="AEC06101.1"/>
    <property type="molecule type" value="Genomic_DNA"/>
</dbReference>
<dbReference type="EMBL" id="AK230169">
    <property type="protein sequence ID" value="BAF01978.1"/>
    <property type="molecule type" value="mRNA"/>
</dbReference>
<dbReference type="RefSeq" id="NP_001318208.1">
    <property type="nucleotide sequence ID" value="NM_001335350.1"/>
</dbReference>
<dbReference type="RefSeq" id="NP_085519.1">
    <property type="nucleotide sequence ID" value="NC_001284.2"/>
</dbReference>
<dbReference type="STRING" id="3702.P93314"/>
<dbReference type="GlyGen" id="P93314">
    <property type="glycosylation" value="1 site"/>
</dbReference>
<dbReference type="PaxDb" id="3702-AT2G07718.1"/>
<dbReference type="EnsemblPlants" id="AT2G07718.1">
    <property type="protein sequence ID" value="AT2G07718.1"/>
    <property type="gene ID" value="AT2G07718"/>
</dbReference>
<dbReference type="EnsemblPlants" id="ATMG00590.1">
    <property type="protein sequence ID" value="ATMG00590.1"/>
    <property type="gene ID" value="ATMG00590"/>
</dbReference>
<dbReference type="GeneID" id="28717841"/>
<dbReference type="Gramene" id="AT2G07718.1">
    <property type="protein sequence ID" value="AT2G07718.1"/>
    <property type="gene ID" value="AT2G07718"/>
</dbReference>
<dbReference type="Gramene" id="ATMG00590.1">
    <property type="protein sequence ID" value="ATMG00590.1"/>
    <property type="gene ID" value="ATMG00590"/>
</dbReference>
<dbReference type="KEGG" id="ath:AT2G07718"/>
<dbReference type="Araport" id="AT2G07718"/>
<dbReference type="Araport" id="ATMG00590"/>
<dbReference type="TAIR" id="AT2G07718"/>
<dbReference type="TAIR" id="ATMG00590">
    <property type="gene designation" value="ORF313"/>
</dbReference>
<dbReference type="HOGENOM" id="CLU_089090_0_0_1"/>
<dbReference type="InParanoid" id="P93314"/>
<dbReference type="PRO" id="PR:P93314"/>
<dbReference type="Proteomes" id="UP000006548">
    <property type="component" value="Chromosome 2"/>
</dbReference>
<dbReference type="Proteomes" id="UP000006548">
    <property type="component" value="Mitochondrion MT"/>
</dbReference>
<dbReference type="GO" id="GO:0031966">
    <property type="term" value="C:mitochondrial membrane"/>
    <property type="evidence" value="ECO:0007669"/>
    <property type="project" value="UniProtKB-SubCell"/>
</dbReference>
<dbReference type="GO" id="GO:0022904">
    <property type="term" value="P:respiratory electron transport chain"/>
    <property type="evidence" value="ECO:0007669"/>
    <property type="project" value="InterPro"/>
</dbReference>
<dbReference type="InterPro" id="IPR016174">
    <property type="entry name" value="Di-haem_cyt_TM"/>
</dbReference>
<dbReference type="PANTHER" id="PTHR33269">
    <property type="entry name" value="NADH-UBIQUINONE OXIDOREDUCTASE CHAIN 6"/>
    <property type="match status" value="1"/>
</dbReference>
<dbReference type="PANTHER" id="PTHR33269:SF17">
    <property type="entry name" value="NADH-UBIQUINONE OXIDOREDUCTASE CHAIN 6"/>
    <property type="match status" value="1"/>
</dbReference>
<dbReference type="SUPFAM" id="SSF81342">
    <property type="entry name" value="Transmembrane di-heme cytochromes"/>
    <property type="match status" value="1"/>
</dbReference>
<sequence length="313" mass="35538">MTIRNQRFSLLKQPISSTLNQHLVDYPTPSNLSYWWGFGPLAGTMILSVLSSPALVSGLMVARAKNLVHSVLFPIPIFFSINQLFHYFCRLPIIKHLATKCQLLLFLISHFLLLLVLTKLVLDLGGYLFMDDLSRALSQFVPGFSGGLGGGSNTPPNPSGDFFLSSYQTSDPDYHDQRRGDSYFSSAPGVQETHRHASGSSTNLHLNLNDQSQDPIFLEVERLSLKCDKVKEKTILKTQSLLLERGYHIPDERDIERAINVVMTEHETIDIDRRRKRFYYLYSCLGKTGNKFWMELLETLADYNINIKSDSDN</sequence>
<reference key="1">
    <citation type="journal article" date="1997" name="Nat. Genet.">
        <title>The mitochondrial genome of Arabidopsis thaliana contains 57 genes in 366,924 nucleotides.</title>
        <authorList>
            <person name="Unseld M."/>
            <person name="Marienfeld J.R."/>
            <person name="Brandt P."/>
            <person name="Brennicke A."/>
        </authorList>
    </citation>
    <scope>NUCLEOTIDE SEQUENCE [LARGE SCALE GENOMIC DNA]</scope>
    <source>
        <strain>cv. C24</strain>
    </source>
</reference>
<reference key="2">
    <citation type="journal article" date="2018" name="Plant Cell">
        <title>Correction of persistent errors in Arabidopsis reference mitochondrial genomes.</title>
        <authorList>
            <person name="Sloan D.B."/>
            <person name="Wu Z."/>
            <person name="Sharbrough J."/>
        </authorList>
    </citation>
    <scope>NUCLEOTIDE SEQUENCE [LARGE SCALE GENOMIC DNA]</scope>
    <source>
        <strain>cv. Columbia</strain>
    </source>
</reference>
<reference key="3">
    <citation type="journal article" date="1999" name="Nature">
        <title>Sequence and analysis of chromosome 2 of the plant Arabidopsis thaliana.</title>
        <authorList>
            <person name="Lin X."/>
            <person name="Kaul S."/>
            <person name="Rounsley S.D."/>
            <person name="Shea T.P."/>
            <person name="Benito M.-I."/>
            <person name="Town C.D."/>
            <person name="Fujii C.Y."/>
            <person name="Mason T.M."/>
            <person name="Bowman C.L."/>
            <person name="Barnstead M.E."/>
            <person name="Feldblyum T.V."/>
            <person name="Buell C.R."/>
            <person name="Ketchum K.A."/>
            <person name="Lee J.J."/>
            <person name="Ronning C.M."/>
            <person name="Koo H.L."/>
            <person name="Moffat K.S."/>
            <person name="Cronin L.A."/>
            <person name="Shen M."/>
            <person name="Pai G."/>
            <person name="Van Aken S."/>
            <person name="Umayam L."/>
            <person name="Tallon L.J."/>
            <person name="Gill J.E."/>
            <person name="Adams M.D."/>
            <person name="Carrera A.J."/>
            <person name="Creasy T.H."/>
            <person name="Goodman H.M."/>
            <person name="Somerville C.R."/>
            <person name="Copenhaver G.P."/>
            <person name="Preuss D."/>
            <person name="Nierman W.C."/>
            <person name="White O."/>
            <person name="Eisen J.A."/>
            <person name="Salzberg S.L."/>
            <person name="Fraser C.M."/>
            <person name="Venter J.C."/>
        </authorList>
    </citation>
    <scope>NUCLEOTIDE SEQUENCE [LARGE SCALE GENOMIC DNA] (AT2G07718)</scope>
    <source>
        <strain>cv. Columbia</strain>
    </source>
</reference>
<reference key="4">
    <citation type="journal article" date="2017" name="Plant J.">
        <title>Araport11: a complete reannotation of the Arabidopsis thaliana reference genome.</title>
        <authorList>
            <person name="Cheng C.Y."/>
            <person name="Krishnakumar V."/>
            <person name="Chan A.P."/>
            <person name="Thibaud-Nissen F."/>
            <person name="Schobel S."/>
            <person name="Town C.D."/>
        </authorList>
    </citation>
    <scope>GENOME REANNOTATION (AT2G07718)</scope>
    <source>
        <strain>cv. Columbia</strain>
    </source>
</reference>
<reference key="5">
    <citation type="submission" date="2006-07" db="EMBL/GenBank/DDBJ databases">
        <title>Large-scale analysis of RIKEN Arabidopsis full-length (RAFL) cDNAs.</title>
        <authorList>
            <person name="Totoki Y."/>
            <person name="Seki M."/>
            <person name="Ishida J."/>
            <person name="Nakajima M."/>
            <person name="Enju A."/>
            <person name="Kamiya A."/>
            <person name="Narusaka M."/>
            <person name="Shin-i T."/>
            <person name="Nakagawa M."/>
            <person name="Sakamoto N."/>
            <person name="Oishi K."/>
            <person name="Kohara Y."/>
            <person name="Kobayashi M."/>
            <person name="Toyoda A."/>
            <person name="Sakaki Y."/>
            <person name="Sakurai T."/>
            <person name="Iida K."/>
            <person name="Akiyama K."/>
            <person name="Satou M."/>
            <person name="Toyoda T."/>
            <person name="Konagaya A."/>
            <person name="Carninci P."/>
            <person name="Kawai J."/>
            <person name="Hayashizaki Y."/>
            <person name="Shinozaki K."/>
        </authorList>
    </citation>
    <scope>NUCLEOTIDE SEQUENCE [LARGE SCALE MRNA] (AT2G07718)</scope>
    <source>
        <strain>cv. Columbia</strain>
    </source>
</reference>
<comment type="subcellular location">
    <subcellularLocation>
        <location evidence="2">Mitochondrion membrane</location>
        <topology evidence="2">Multi-pass membrane protein</topology>
    </subcellularLocation>
</comment>
<comment type="miscellaneous">
    <text>A stretch of 270 kb of the mitochondrial genome is duplicated within the centromere of chromosome 2 resulting in the duplication of the gene. The expression of this duplicated gene (At2g07718) is demonstrated.</text>
</comment>
<comment type="similarity">
    <text evidence="2">Belongs to the cytochrome b family.</text>
</comment>
<geneLocation type="mitochondrion"/>
<accession>P93314</accession>
<accession>Q0WLM9</accession>
<keyword id="KW-0472">Membrane</keyword>
<keyword id="KW-0496">Mitochondrion</keyword>
<keyword id="KW-1185">Reference proteome</keyword>
<keyword id="KW-0812">Transmembrane</keyword>
<keyword id="KW-1133">Transmembrane helix</keyword>
<name>M590_ARATH</name>
<feature type="chain" id="PRO_0000196778" description="Uncharacterized mitochondrial cytochrome b-like protein AtMg00590">
    <location>
        <begin position="1"/>
        <end position="313"/>
    </location>
</feature>
<feature type="transmembrane region" description="Helical" evidence="1">
    <location>
        <begin position="41"/>
        <end position="61"/>
    </location>
</feature>
<feature type="transmembrane region" description="Helical" evidence="1">
    <location>
        <begin position="68"/>
        <end position="88"/>
    </location>
</feature>
<feature type="transmembrane region" description="Helical" evidence="1">
    <location>
        <begin position="102"/>
        <end position="122"/>
    </location>
</feature>
<evidence type="ECO:0000255" key="1"/>
<evidence type="ECO:0000305" key="2"/>
<evidence type="ECO:0000312" key="3">
    <source>
        <dbReference type="Araport" id="AT2G07718"/>
    </source>
</evidence>
<evidence type="ECO:0000312" key="4">
    <source>
        <dbReference type="Araport" id="ATMG00590"/>
    </source>
</evidence>
<proteinExistence type="evidence at transcript level"/>
<organism>
    <name type="scientific">Arabidopsis thaliana</name>
    <name type="common">Mouse-ear cress</name>
    <dbReference type="NCBI Taxonomy" id="3702"/>
    <lineage>
        <taxon>Eukaryota</taxon>
        <taxon>Viridiplantae</taxon>
        <taxon>Streptophyta</taxon>
        <taxon>Embryophyta</taxon>
        <taxon>Tracheophyta</taxon>
        <taxon>Spermatophyta</taxon>
        <taxon>Magnoliopsida</taxon>
        <taxon>eudicotyledons</taxon>
        <taxon>Gunneridae</taxon>
        <taxon>Pentapetalae</taxon>
        <taxon>rosids</taxon>
        <taxon>malvids</taxon>
        <taxon>Brassicales</taxon>
        <taxon>Brassicaceae</taxon>
        <taxon>Camelineae</taxon>
        <taxon>Arabidopsis</taxon>
    </lineage>
</organism>
<protein>
    <recommendedName>
        <fullName>Uncharacterized mitochondrial cytochrome b-like protein AtMg00590</fullName>
    </recommendedName>
    <alternativeName>
        <fullName>ORF313</fullName>
    </alternativeName>
</protein>
<gene>
    <name evidence="4" type="ordered locus">AtMg00590</name>
</gene>
<gene>
    <name evidence="3" type="ordered locus">At2g07718</name>
</gene>